<feature type="chain" id="PRO_0000148674" description="Argininosuccinate synthase">
    <location>
        <begin position="1"/>
        <end position="394"/>
    </location>
</feature>
<feature type="binding site" evidence="1">
    <location>
        <begin position="8"/>
        <end position="16"/>
    </location>
    <ligand>
        <name>ATP</name>
        <dbReference type="ChEBI" id="CHEBI:30616"/>
    </ligand>
</feature>
<feature type="binding site" evidence="1">
    <location>
        <position position="86"/>
    </location>
    <ligand>
        <name>L-citrulline</name>
        <dbReference type="ChEBI" id="CHEBI:57743"/>
    </ligand>
</feature>
<feature type="binding site" evidence="1">
    <location>
        <position position="91"/>
    </location>
    <ligand>
        <name>L-citrulline</name>
        <dbReference type="ChEBI" id="CHEBI:57743"/>
    </ligand>
</feature>
<feature type="binding site" evidence="1">
    <location>
        <position position="116"/>
    </location>
    <ligand>
        <name>ATP</name>
        <dbReference type="ChEBI" id="CHEBI:30616"/>
    </ligand>
</feature>
<feature type="binding site" evidence="1">
    <location>
        <position position="118"/>
    </location>
    <ligand>
        <name>L-aspartate</name>
        <dbReference type="ChEBI" id="CHEBI:29991"/>
    </ligand>
</feature>
<feature type="binding site" evidence="1">
    <location>
        <position position="122"/>
    </location>
    <ligand>
        <name>L-aspartate</name>
        <dbReference type="ChEBI" id="CHEBI:29991"/>
    </ligand>
</feature>
<feature type="binding site" evidence="1">
    <location>
        <position position="122"/>
    </location>
    <ligand>
        <name>L-citrulline</name>
        <dbReference type="ChEBI" id="CHEBI:57743"/>
    </ligand>
</feature>
<feature type="binding site" evidence="1">
    <location>
        <position position="123"/>
    </location>
    <ligand>
        <name>L-aspartate</name>
        <dbReference type="ChEBI" id="CHEBI:29991"/>
    </ligand>
</feature>
<feature type="binding site" evidence="1">
    <location>
        <position position="126"/>
    </location>
    <ligand>
        <name>L-citrulline</name>
        <dbReference type="ChEBI" id="CHEBI:57743"/>
    </ligand>
</feature>
<feature type="binding site" evidence="1">
    <location>
        <position position="172"/>
    </location>
    <ligand>
        <name>L-citrulline</name>
        <dbReference type="ChEBI" id="CHEBI:57743"/>
    </ligand>
</feature>
<feature type="binding site" evidence="1">
    <location>
        <position position="181"/>
    </location>
    <ligand>
        <name>L-citrulline</name>
        <dbReference type="ChEBI" id="CHEBI:57743"/>
    </ligand>
</feature>
<feature type="binding site" evidence="1">
    <location>
        <position position="257"/>
    </location>
    <ligand>
        <name>L-citrulline</name>
        <dbReference type="ChEBI" id="CHEBI:57743"/>
    </ligand>
</feature>
<feature type="binding site" evidence="1">
    <location>
        <position position="269"/>
    </location>
    <ligand>
        <name>L-citrulline</name>
        <dbReference type="ChEBI" id="CHEBI:57743"/>
    </ligand>
</feature>
<evidence type="ECO:0000255" key="1">
    <source>
        <dbReference type="HAMAP-Rule" id="MF_00005"/>
    </source>
</evidence>
<sequence>MVKKVALAYSGGLDTSVCIPILKEKYGYDEVITISVDVGQPEEEIKKADAKAEKISNKHYTIDAKEEFVKDYIFPLIKANGDYEGYVMGTSVARPLIAKKVVEAAIKEGAVALAHGCTGKGNDQLRFEAVFRQTDMDVIAPMREMNLTREWEIDYAKEHGIPVEVTKAKPWSVDENIWSRSIEGGKLEDPSFVPPEEIFEWTKSAEDAPNEPRIVDIDFEAGVPVALDGEKLGGYALVRKLNEIAGENGVGRTDMIEDRVLGLKARENYEHPAATVLLAAHADLEKLVLTRGELKFKKIVDEQWSELAYYGLVDEPLYADLNAFIDKSQERVTGTVKVKLYKGALTILARSSPNALYSEDLVSFDSQTIDQKDAEGFAKYHGFQARMYRKVMEK</sequence>
<comment type="catalytic activity">
    <reaction evidence="1">
        <text>L-citrulline + L-aspartate + ATP = 2-(N(omega)-L-arginino)succinate + AMP + diphosphate + H(+)</text>
        <dbReference type="Rhea" id="RHEA:10932"/>
        <dbReference type="ChEBI" id="CHEBI:15378"/>
        <dbReference type="ChEBI" id="CHEBI:29991"/>
        <dbReference type="ChEBI" id="CHEBI:30616"/>
        <dbReference type="ChEBI" id="CHEBI:33019"/>
        <dbReference type="ChEBI" id="CHEBI:57472"/>
        <dbReference type="ChEBI" id="CHEBI:57743"/>
        <dbReference type="ChEBI" id="CHEBI:456215"/>
        <dbReference type="EC" id="6.3.4.5"/>
    </reaction>
</comment>
<comment type="pathway">
    <text evidence="1">Amino-acid biosynthesis; L-arginine biosynthesis; L-arginine from L-ornithine and carbamoyl phosphate: step 2/3.</text>
</comment>
<comment type="subunit">
    <text evidence="1">Homotetramer.</text>
</comment>
<comment type="subcellular location">
    <subcellularLocation>
        <location evidence="1">Cytoplasm</location>
    </subcellularLocation>
</comment>
<comment type="similarity">
    <text evidence="1">Belongs to the argininosuccinate synthase family. Type 1 subfamily.</text>
</comment>
<accession>Q8TNY5</accession>
<proteinExistence type="inferred from homology"/>
<name>ASSY_METAC</name>
<dbReference type="EC" id="6.3.4.5" evidence="1"/>
<dbReference type="EMBL" id="AE010299">
    <property type="protein sequence ID" value="AAM05540.1"/>
    <property type="molecule type" value="Genomic_DNA"/>
</dbReference>
<dbReference type="RefSeq" id="WP_011022128.1">
    <property type="nucleotide sequence ID" value="NC_003552.1"/>
</dbReference>
<dbReference type="SMR" id="Q8TNY5"/>
<dbReference type="FunCoup" id="Q8TNY5">
    <property type="interactions" value="200"/>
</dbReference>
<dbReference type="STRING" id="188937.MA_2142"/>
<dbReference type="EnsemblBacteria" id="AAM05540">
    <property type="protein sequence ID" value="AAM05540"/>
    <property type="gene ID" value="MA_2142"/>
</dbReference>
<dbReference type="GeneID" id="1474030"/>
<dbReference type="KEGG" id="mac:MA_2142"/>
<dbReference type="HOGENOM" id="CLU_032784_4_0_2"/>
<dbReference type="InParanoid" id="Q8TNY5"/>
<dbReference type="OrthoDB" id="5877at2157"/>
<dbReference type="PhylomeDB" id="Q8TNY5"/>
<dbReference type="UniPathway" id="UPA00068">
    <property type="reaction ID" value="UER00113"/>
</dbReference>
<dbReference type="Proteomes" id="UP000002487">
    <property type="component" value="Chromosome"/>
</dbReference>
<dbReference type="GO" id="GO:0005737">
    <property type="term" value="C:cytoplasm"/>
    <property type="evidence" value="ECO:0000318"/>
    <property type="project" value="GO_Central"/>
</dbReference>
<dbReference type="GO" id="GO:0004055">
    <property type="term" value="F:argininosuccinate synthase activity"/>
    <property type="evidence" value="ECO:0000318"/>
    <property type="project" value="GO_Central"/>
</dbReference>
<dbReference type="GO" id="GO:0005524">
    <property type="term" value="F:ATP binding"/>
    <property type="evidence" value="ECO:0007669"/>
    <property type="project" value="UniProtKB-UniRule"/>
</dbReference>
<dbReference type="GO" id="GO:0000053">
    <property type="term" value="P:argininosuccinate metabolic process"/>
    <property type="evidence" value="ECO:0000318"/>
    <property type="project" value="GO_Central"/>
</dbReference>
<dbReference type="GO" id="GO:0006526">
    <property type="term" value="P:L-arginine biosynthetic process"/>
    <property type="evidence" value="ECO:0000318"/>
    <property type="project" value="GO_Central"/>
</dbReference>
<dbReference type="GO" id="GO:0000050">
    <property type="term" value="P:urea cycle"/>
    <property type="evidence" value="ECO:0000318"/>
    <property type="project" value="GO_Central"/>
</dbReference>
<dbReference type="CDD" id="cd01999">
    <property type="entry name" value="ASS"/>
    <property type="match status" value="1"/>
</dbReference>
<dbReference type="FunFam" id="3.40.50.620:FF:000019">
    <property type="entry name" value="Argininosuccinate synthase"/>
    <property type="match status" value="1"/>
</dbReference>
<dbReference type="FunFam" id="3.90.1260.10:FF:000007">
    <property type="entry name" value="Argininosuccinate synthase"/>
    <property type="match status" value="1"/>
</dbReference>
<dbReference type="Gene3D" id="3.90.1260.10">
    <property type="entry name" value="Argininosuccinate synthetase, chain A, domain 2"/>
    <property type="match status" value="1"/>
</dbReference>
<dbReference type="Gene3D" id="3.40.50.620">
    <property type="entry name" value="HUPs"/>
    <property type="match status" value="1"/>
</dbReference>
<dbReference type="HAMAP" id="MF_00005">
    <property type="entry name" value="Arg_succ_synth_type1"/>
    <property type="match status" value="1"/>
</dbReference>
<dbReference type="InterPro" id="IPR048268">
    <property type="entry name" value="Arginosuc_syn_C"/>
</dbReference>
<dbReference type="InterPro" id="IPR048267">
    <property type="entry name" value="Arginosuc_syn_N"/>
</dbReference>
<dbReference type="InterPro" id="IPR001518">
    <property type="entry name" value="Arginosuc_synth"/>
</dbReference>
<dbReference type="InterPro" id="IPR018223">
    <property type="entry name" value="Arginosuc_synth_CS"/>
</dbReference>
<dbReference type="InterPro" id="IPR023434">
    <property type="entry name" value="Arginosuc_synth_type_1_subfam"/>
</dbReference>
<dbReference type="InterPro" id="IPR024074">
    <property type="entry name" value="AS_cat/multimer_dom_body"/>
</dbReference>
<dbReference type="InterPro" id="IPR014729">
    <property type="entry name" value="Rossmann-like_a/b/a_fold"/>
</dbReference>
<dbReference type="NCBIfam" id="TIGR00032">
    <property type="entry name" value="argG"/>
    <property type="match status" value="1"/>
</dbReference>
<dbReference type="NCBIfam" id="NF001770">
    <property type="entry name" value="PRK00509.1"/>
    <property type="match status" value="1"/>
</dbReference>
<dbReference type="NCBIfam" id="NF010392">
    <property type="entry name" value="PRK13820.1"/>
    <property type="match status" value="1"/>
</dbReference>
<dbReference type="PANTHER" id="PTHR11587">
    <property type="entry name" value="ARGININOSUCCINATE SYNTHASE"/>
    <property type="match status" value="1"/>
</dbReference>
<dbReference type="PANTHER" id="PTHR11587:SF2">
    <property type="entry name" value="ARGININOSUCCINATE SYNTHASE"/>
    <property type="match status" value="1"/>
</dbReference>
<dbReference type="Pfam" id="PF20979">
    <property type="entry name" value="Arginosuc_syn_C"/>
    <property type="match status" value="1"/>
</dbReference>
<dbReference type="Pfam" id="PF00764">
    <property type="entry name" value="Arginosuc_synth"/>
    <property type="match status" value="1"/>
</dbReference>
<dbReference type="SUPFAM" id="SSF52402">
    <property type="entry name" value="Adenine nucleotide alpha hydrolases-like"/>
    <property type="match status" value="1"/>
</dbReference>
<dbReference type="SUPFAM" id="SSF69864">
    <property type="entry name" value="Argininosuccinate synthetase, C-terminal domain"/>
    <property type="match status" value="1"/>
</dbReference>
<dbReference type="PROSITE" id="PS00564">
    <property type="entry name" value="ARGININOSUCCIN_SYN_1"/>
    <property type="match status" value="1"/>
</dbReference>
<dbReference type="PROSITE" id="PS00565">
    <property type="entry name" value="ARGININOSUCCIN_SYN_2"/>
    <property type="match status" value="1"/>
</dbReference>
<keyword id="KW-0028">Amino-acid biosynthesis</keyword>
<keyword id="KW-0055">Arginine biosynthesis</keyword>
<keyword id="KW-0067">ATP-binding</keyword>
<keyword id="KW-0963">Cytoplasm</keyword>
<keyword id="KW-0436">Ligase</keyword>
<keyword id="KW-0547">Nucleotide-binding</keyword>
<keyword id="KW-1185">Reference proteome</keyword>
<protein>
    <recommendedName>
        <fullName evidence="1">Argininosuccinate synthase</fullName>
        <ecNumber evidence="1">6.3.4.5</ecNumber>
    </recommendedName>
    <alternativeName>
        <fullName evidence="1">Citrulline--aspartate ligase</fullName>
    </alternativeName>
</protein>
<organism>
    <name type="scientific">Methanosarcina acetivorans (strain ATCC 35395 / DSM 2834 / JCM 12185 / C2A)</name>
    <dbReference type="NCBI Taxonomy" id="188937"/>
    <lineage>
        <taxon>Archaea</taxon>
        <taxon>Methanobacteriati</taxon>
        <taxon>Methanobacteriota</taxon>
        <taxon>Stenosarchaea group</taxon>
        <taxon>Methanomicrobia</taxon>
        <taxon>Methanosarcinales</taxon>
        <taxon>Methanosarcinaceae</taxon>
        <taxon>Methanosarcina</taxon>
    </lineage>
</organism>
<gene>
    <name evidence="1" type="primary">argG</name>
    <name type="ordered locus">MA_2142</name>
</gene>
<reference key="1">
    <citation type="journal article" date="2002" name="Genome Res.">
        <title>The genome of Methanosarcina acetivorans reveals extensive metabolic and physiological diversity.</title>
        <authorList>
            <person name="Galagan J.E."/>
            <person name="Nusbaum C."/>
            <person name="Roy A."/>
            <person name="Endrizzi M.G."/>
            <person name="Macdonald P."/>
            <person name="FitzHugh W."/>
            <person name="Calvo S."/>
            <person name="Engels R."/>
            <person name="Smirnov S."/>
            <person name="Atnoor D."/>
            <person name="Brown A."/>
            <person name="Allen N."/>
            <person name="Naylor J."/>
            <person name="Stange-Thomann N."/>
            <person name="DeArellano K."/>
            <person name="Johnson R."/>
            <person name="Linton L."/>
            <person name="McEwan P."/>
            <person name="McKernan K."/>
            <person name="Talamas J."/>
            <person name="Tirrell A."/>
            <person name="Ye W."/>
            <person name="Zimmer A."/>
            <person name="Barber R.D."/>
            <person name="Cann I."/>
            <person name="Graham D.E."/>
            <person name="Grahame D.A."/>
            <person name="Guss A.M."/>
            <person name="Hedderich R."/>
            <person name="Ingram-Smith C."/>
            <person name="Kuettner H.C."/>
            <person name="Krzycki J.A."/>
            <person name="Leigh J.A."/>
            <person name="Li W."/>
            <person name="Liu J."/>
            <person name="Mukhopadhyay B."/>
            <person name="Reeve J.N."/>
            <person name="Smith K."/>
            <person name="Springer T.A."/>
            <person name="Umayam L.A."/>
            <person name="White O."/>
            <person name="White R.H."/>
            <person name="de Macario E.C."/>
            <person name="Ferry J.G."/>
            <person name="Jarrell K.F."/>
            <person name="Jing H."/>
            <person name="Macario A.J.L."/>
            <person name="Paulsen I.T."/>
            <person name="Pritchett M."/>
            <person name="Sowers K.R."/>
            <person name="Swanson R.V."/>
            <person name="Zinder S.H."/>
            <person name="Lander E."/>
            <person name="Metcalf W.W."/>
            <person name="Birren B."/>
        </authorList>
    </citation>
    <scope>NUCLEOTIDE SEQUENCE [LARGE SCALE GENOMIC DNA]</scope>
    <source>
        <strain>ATCC 35395 / DSM 2834 / JCM 12185 / C2A</strain>
    </source>
</reference>